<dbReference type="EMBL" id="AY825925">
    <property type="protein sequence ID" value="AAV80708.1"/>
    <property type="molecule type" value="mRNA"/>
</dbReference>
<dbReference type="EMBL" id="AK143900">
    <property type="protein sequence ID" value="BAE25589.1"/>
    <property type="molecule type" value="mRNA"/>
</dbReference>
<dbReference type="EMBL" id="BC141377">
    <property type="protein sequence ID" value="AAI41378.1"/>
    <property type="molecule type" value="mRNA"/>
</dbReference>
<dbReference type="CCDS" id="CCDS17241.1"/>
<dbReference type="RefSeq" id="NP_001010834.1">
    <property type="nucleotide sequence ID" value="NM_001010834.2"/>
</dbReference>
<dbReference type="SMR" id="Q5PT54"/>
<dbReference type="STRING" id="10090.ENSMUSP00000077808"/>
<dbReference type="GlyCosmos" id="Q5PT54">
    <property type="glycosylation" value="2 sites, No reported glycans"/>
</dbReference>
<dbReference type="GlyGen" id="Q5PT54">
    <property type="glycosylation" value="2 sites"/>
</dbReference>
<dbReference type="iPTMnet" id="Q5PT54"/>
<dbReference type="PhosphoSitePlus" id="Q5PT54"/>
<dbReference type="SwissPalm" id="Q5PT54"/>
<dbReference type="PaxDb" id="10090-ENSMUSP00000077808"/>
<dbReference type="ProteomicsDB" id="253032"/>
<dbReference type="Antibodypedia" id="50193">
    <property type="antibodies" value="31 antibodies from 16 providers"/>
</dbReference>
<dbReference type="DNASU" id="241877"/>
<dbReference type="Ensembl" id="ENSMUST00000078748.4">
    <property type="protein sequence ID" value="ENSMUSP00000077808.4"/>
    <property type="gene ID" value="ENSMUSG00000058921.4"/>
</dbReference>
<dbReference type="GeneID" id="241877"/>
<dbReference type="KEGG" id="mmu:241877"/>
<dbReference type="UCSC" id="uc008opr.1">
    <property type="organism name" value="mouse"/>
</dbReference>
<dbReference type="AGR" id="MGI:2685251"/>
<dbReference type="CTD" id="347051"/>
<dbReference type="MGI" id="MGI:2685251">
    <property type="gene designation" value="Slc10a5"/>
</dbReference>
<dbReference type="VEuPathDB" id="HostDB:ENSMUSG00000058921"/>
<dbReference type="eggNOG" id="KOG2718">
    <property type="taxonomic scope" value="Eukaryota"/>
</dbReference>
<dbReference type="GeneTree" id="ENSGT00950000182808"/>
<dbReference type="HOGENOM" id="CLU_034788_2_0_1"/>
<dbReference type="InParanoid" id="Q5PT54"/>
<dbReference type="OMA" id="AWMAHFR"/>
<dbReference type="OrthoDB" id="203097at2759"/>
<dbReference type="PhylomeDB" id="Q5PT54"/>
<dbReference type="TreeFam" id="TF315811"/>
<dbReference type="BioGRID-ORCS" id="241877">
    <property type="hits" value="0 hits in 79 CRISPR screens"/>
</dbReference>
<dbReference type="PRO" id="PR:Q5PT54"/>
<dbReference type="Proteomes" id="UP000000589">
    <property type="component" value="Chromosome 3"/>
</dbReference>
<dbReference type="RNAct" id="Q5PT54">
    <property type="molecule type" value="protein"/>
</dbReference>
<dbReference type="Bgee" id="ENSMUSG00000058921">
    <property type="expression patterns" value="Expressed in proximal tubule and 20 other cell types or tissues"/>
</dbReference>
<dbReference type="GO" id="GO:0016020">
    <property type="term" value="C:membrane"/>
    <property type="evidence" value="ECO:0007669"/>
    <property type="project" value="UniProtKB-SubCell"/>
</dbReference>
<dbReference type="GO" id="GO:0015293">
    <property type="term" value="F:symporter activity"/>
    <property type="evidence" value="ECO:0007669"/>
    <property type="project" value="UniProtKB-KW"/>
</dbReference>
<dbReference type="GO" id="GO:0006814">
    <property type="term" value="P:sodium ion transport"/>
    <property type="evidence" value="ECO:0007669"/>
    <property type="project" value="UniProtKB-KW"/>
</dbReference>
<dbReference type="Gene3D" id="1.20.1530.20">
    <property type="match status" value="1"/>
</dbReference>
<dbReference type="InterPro" id="IPR002657">
    <property type="entry name" value="BilAc:Na_symport/Acr3"/>
</dbReference>
<dbReference type="InterPro" id="IPR004710">
    <property type="entry name" value="Bilac:Na_transpt"/>
</dbReference>
<dbReference type="InterPro" id="IPR038770">
    <property type="entry name" value="Na+/solute_symporter_sf"/>
</dbReference>
<dbReference type="PANTHER" id="PTHR10361">
    <property type="entry name" value="SODIUM-BILE ACID COTRANSPORTER"/>
    <property type="match status" value="1"/>
</dbReference>
<dbReference type="PANTHER" id="PTHR10361:SF29">
    <property type="entry name" value="SODIUM_BILE ACID COTRANSPORTER 5"/>
    <property type="match status" value="1"/>
</dbReference>
<dbReference type="Pfam" id="PF24690">
    <property type="entry name" value="NTCP5_P3_N"/>
    <property type="match status" value="1"/>
</dbReference>
<dbReference type="Pfam" id="PF01758">
    <property type="entry name" value="SBF"/>
    <property type="match status" value="1"/>
</dbReference>
<sequence>MSGNFFIFLLLLVTPGEAKKSFLSFLNIQNTEMLSFTRTEENIVVRSSYKDKQPHSSYLLVKLEDPKVLQVVNVTKTSLAVTDFTVNLKTFPGETNVTLQLWESEGRQTTLIDELKNVRVRVFRQTDDSLLQAPIHVDSSIFLLVLSMILLNKCAFGCKIEFQVLQTVWKRPLPILLGVVIQFFLMPFCGFLLSQILGLPKAQAFGFVMTCTCPGGGGGYLFALLLEGDVTLAILMTCTSTSLALIMMPVNSYFYSRLLGLAGAFHVPVLKIVSTLLFILMPMSTGVIIKHKMPAKAICLERVVRPLSLTLMFVGIYLAFRMGLVFLRMANLEVFLLGLLVPALGLLFGYSLAKVYLLPLPVCKTVALETGMLNSFLALAIIQLSFSQPKAHEASVAPFTVAMCSSCEMLLLLLVYKAKRRPSLSTEYEKTPLV</sequence>
<organism>
    <name type="scientific">Mus musculus</name>
    <name type="common">Mouse</name>
    <dbReference type="NCBI Taxonomy" id="10090"/>
    <lineage>
        <taxon>Eukaryota</taxon>
        <taxon>Metazoa</taxon>
        <taxon>Chordata</taxon>
        <taxon>Craniata</taxon>
        <taxon>Vertebrata</taxon>
        <taxon>Euteleostomi</taxon>
        <taxon>Mammalia</taxon>
        <taxon>Eutheria</taxon>
        <taxon>Euarchontoglires</taxon>
        <taxon>Glires</taxon>
        <taxon>Rodentia</taxon>
        <taxon>Myomorpha</taxon>
        <taxon>Muroidea</taxon>
        <taxon>Muridae</taxon>
        <taxon>Murinae</taxon>
        <taxon>Mus</taxon>
        <taxon>Mus</taxon>
    </lineage>
</organism>
<evidence type="ECO:0000255" key="1"/>
<evidence type="ECO:0000305" key="2"/>
<comment type="subcellular location">
    <subcellularLocation>
        <location evidence="2">Membrane</location>
        <topology evidence="2">Multi-pass membrane protein</topology>
    </subcellularLocation>
</comment>
<comment type="similarity">
    <text evidence="2">Belongs to the bile acid:sodium symporter (BASS) (TC 2.A.28) family.</text>
</comment>
<feature type="signal peptide" evidence="1">
    <location>
        <begin position="1"/>
        <end position="18"/>
    </location>
</feature>
<feature type="chain" id="PRO_0000263746" description="Sodium/bile acid cotransporter 5">
    <location>
        <begin position="19"/>
        <end position="434"/>
    </location>
</feature>
<feature type="topological domain" description="Extracellular" evidence="1">
    <location>
        <begin position="19"/>
        <end position="129"/>
    </location>
</feature>
<feature type="transmembrane region" description="Helical" evidence="1">
    <location>
        <begin position="130"/>
        <end position="150"/>
    </location>
</feature>
<feature type="topological domain" description="Cytoplasmic" evidence="1">
    <location>
        <begin position="151"/>
        <end position="172"/>
    </location>
</feature>
<feature type="transmembrane region" description="Helical" evidence="1">
    <location>
        <begin position="173"/>
        <end position="193"/>
    </location>
</feature>
<feature type="topological domain" description="Extracellular" evidence="1">
    <location>
        <begin position="194"/>
        <end position="203"/>
    </location>
</feature>
<feature type="transmembrane region" description="Helical" evidence="1">
    <location>
        <begin position="204"/>
        <end position="226"/>
    </location>
</feature>
<feature type="topological domain" description="Cytoplasmic" evidence="1">
    <location>
        <begin position="227"/>
        <end position="232"/>
    </location>
</feature>
<feature type="transmembrane region" description="Helical" evidence="1">
    <location>
        <begin position="233"/>
        <end position="255"/>
    </location>
</feature>
<feature type="topological domain" description="Extracellular" evidence="1">
    <location>
        <begin position="256"/>
        <end position="268"/>
    </location>
</feature>
<feature type="transmembrane region" description="Helical" evidence="1">
    <location>
        <begin position="269"/>
        <end position="289"/>
    </location>
</feature>
<feature type="topological domain" description="Cytoplasmic" evidence="1">
    <location>
        <begin position="290"/>
        <end position="306"/>
    </location>
</feature>
<feature type="transmembrane region" description="Helical" evidence="1">
    <location>
        <begin position="307"/>
        <end position="327"/>
    </location>
</feature>
<feature type="topological domain" description="Extracellular" evidence="1">
    <location>
        <begin position="328"/>
        <end position="331"/>
    </location>
</feature>
<feature type="transmembrane region" description="Helical" evidence="1">
    <location>
        <begin position="332"/>
        <end position="352"/>
    </location>
</feature>
<feature type="topological domain" description="Cytoplasmic" evidence="1">
    <location>
        <begin position="353"/>
        <end position="365"/>
    </location>
</feature>
<feature type="transmembrane region" description="Helical" evidence="1">
    <location>
        <begin position="366"/>
        <end position="386"/>
    </location>
</feature>
<feature type="topological domain" description="Extracellular" evidence="1">
    <location>
        <begin position="387"/>
        <end position="395"/>
    </location>
</feature>
<feature type="transmembrane region" description="Helical" evidence="1">
    <location>
        <begin position="396"/>
        <end position="416"/>
    </location>
</feature>
<feature type="topological domain" description="Cytoplasmic" evidence="1">
    <location>
        <begin position="417"/>
        <end position="434"/>
    </location>
</feature>
<feature type="glycosylation site" description="N-linked (GlcNAc...) asparagine" evidence="1">
    <location>
        <position position="73"/>
    </location>
</feature>
<feature type="glycosylation site" description="N-linked (GlcNAc...) asparagine" evidence="1">
    <location>
        <position position="96"/>
    </location>
</feature>
<name>NTCP5_MOUSE</name>
<protein>
    <recommendedName>
        <fullName>Sodium/bile acid cotransporter 5</fullName>
    </recommendedName>
    <alternativeName>
        <fullName>Na(+)/bile acid cotransporter 5</fullName>
    </alternativeName>
    <alternativeName>
        <fullName>Solute carrier family 10 member 5</fullName>
    </alternativeName>
</protein>
<keyword id="KW-0325">Glycoprotein</keyword>
<keyword id="KW-0406">Ion transport</keyword>
<keyword id="KW-0472">Membrane</keyword>
<keyword id="KW-1185">Reference proteome</keyword>
<keyword id="KW-0732">Signal</keyword>
<keyword id="KW-0915">Sodium</keyword>
<keyword id="KW-0739">Sodium transport</keyword>
<keyword id="KW-0769">Symport</keyword>
<keyword id="KW-0812">Transmembrane</keyword>
<keyword id="KW-1133">Transmembrane helix</keyword>
<keyword id="KW-0813">Transport</keyword>
<proteinExistence type="evidence at transcript level"/>
<gene>
    <name type="primary">Slc10a5</name>
    <name type="synonym">Gm405</name>
</gene>
<reference key="1">
    <citation type="submission" date="2004-11" db="EMBL/GenBank/DDBJ databases">
        <authorList>
            <person name="Fernandes C."/>
            <person name="Geyer J."/>
            <person name="Petzinger E."/>
        </authorList>
    </citation>
    <scope>NUCLEOTIDE SEQUENCE [MRNA]</scope>
    <source>
        <strain>C57BL/6J</strain>
        <tissue>Liver</tissue>
    </source>
</reference>
<reference key="2">
    <citation type="journal article" date="2005" name="Science">
        <title>The transcriptional landscape of the mammalian genome.</title>
        <authorList>
            <person name="Carninci P."/>
            <person name="Kasukawa T."/>
            <person name="Katayama S."/>
            <person name="Gough J."/>
            <person name="Frith M.C."/>
            <person name="Maeda N."/>
            <person name="Oyama R."/>
            <person name="Ravasi T."/>
            <person name="Lenhard B."/>
            <person name="Wells C."/>
            <person name="Kodzius R."/>
            <person name="Shimokawa K."/>
            <person name="Bajic V.B."/>
            <person name="Brenner S.E."/>
            <person name="Batalov S."/>
            <person name="Forrest A.R."/>
            <person name="Zavolan M."/>
            <person name="Davis M.J."/>
            <person name="Wilming L.G."/>
            <person name="Aidinis V."/>
            <person name="Allen J.E."/>
            <person name="Ambesi-Impiombato A."/>
            <person name="Apweiler R."/>
            <person name="Aturaliya R.N."/>
            <person name="Bailey T.L."/>
            <person name="Bansal M."/>
            <person name="Baxter L."/>
            <person name="Beisel K.W."/>
            <person name="Bersano T."/>
            <person name="Bono H."/>
            <person name="Chalk A.M."/>
            <person name="Chiu K.P."/>
            <person name="Choudhary V."/>
            <person name="Christoffels A."/>
            <person name="Clutterbuck D.R."/>
            <person name="Crowe M.L."/>
            <person name="Dalla E."/>
            <person name="Dalrymple B.P."/>
            <person name="de Bono B."/>
            <person name="Della Gatta G."/>
            <person name="di Bernardo D."/>
            <person name="Down T."/>
            <person name="Engstrom P."/>
            <person name="Fagiolini M."/>
            <person name="Faulkner G."/>
            <person name="Fletcher C.F."/>
            <person name="Fukushima T."/>
            <person name="Furuno M."/>
            <person name="Futaki S."/>
            <person name="Gariboldi M."/>
            <person name="Georgii-Hemming P."/>
            <person name="Gingeras T.R."/>
            <person name="Gojobori T."/>
            <person name="Green R.E."/>
            <person name="Gustincich S."/>
            <person name="Harbers M."/>
            <person name="Hayashi Y."/>
            <person name="Hensch T.K."/>
            <person name="Hirokawa N."/>
            <person name="Hill D."/>
            <person name="Huminiecki L."/>
            <person name="Iacono M."/>
            <person name="Ikeo K."/>
            <person name="Iwama A."/>
            <person name="Ishikawa T."/>
            <person name="Jakt M."/>
            <person name="Kanapin A."/>
            <person name="Katoh M."/>
            <person name="Kawasawa Y."/>
            <person name="Kelso J."/>
            <person name="Kitamura H."/>
            <person name="Kitano H."/>
            <person name="Kollias G."/>
            <person name="Krishnan S.P."/>
            <person name="Kruger A."/>
            <person name="Kummerfeld S.K."/>
            <person name="Kurochkin I.V."/>
            <person name="Lareau L.F."/>
            <person name="Lazarevic D."/>
            <person name="Lipovich L."/>
            <person name="Liu J."/>
            <person name="Liuni S."/>
            <person name="McWilliam S."/>
            <person name="Madan Babu M."/>
            <person name="Madera M."/>
            <person name="Marchionni L."/>
            <person name="Matsuda H."/>
            <person name="Matsuzawa S."/>
            <person name="Miki H."/>
            <person name="Mignone F."/>
            <person name="Miyake S."/>
            <person name="Morris K."/>
            <person name="Mottagui-Tabar S."/>
            <person name="Mulder N."/>
            <person name="Nakano N."/>
            <person name="Nakauchi H."/>
            <person name="Ng P."/>
            <person name="Nilsson R."/>
            <person name="Nishiguchi S."/>
            <person name="Nishikawa S."/>
            <person name="Nori F."/>
            <person name="Ohara O."/>
            <person name="Okazaki Y."/>
            <person name="Orlando V."/>
            <person name="Pang K.C."/>
            <person name="Pavan W.J."/>
            <person name="Pavesi G."/>
            <person name="Pesole G."/>
            <person name="Petrovsky N."/>
            <person name="Piazza S."/>
            <person name="Reed J."/>
            <person name="Reid J.F."/>
            <person name="Ring B.Z."/>
            <person name="Ringwald M."/>
            <person name="Rost B."/>
            <person name="Ruan Y."/>
            <person name="Salzberg S.L."/>
            <person name="Sandelin A."/>
            <person name="Schneider C."/>
            <person name="Schoenbach C."/>
            <person name="Sekiguchi K."/>
            <person name="Semple C.A."/>
            <person name="Seno S."/>
            <person name="Sessa L."/>
            <person name="Sheng Y."/>
            <person name="Shibata Y."/>
            <person name="Shimada H."/>
            <person name="Shimada K."/>
            <person name="Silva D."/>
            <person name="Sinclair B."/>
            <person name="Sperling S."/>
            <person name="Stupka E."/>
            <person name="Sugiura K."/>
            <person name="Sultana R."/>
            <person name="Takenaka Y."/>
            <person name="Taki K."/>
            <person name="Tammoja K."/>
            <person name="Tan S.L."/>
            <person name="Tang S."/>
            <person name="Taylor M.S."/>
            <person name="Tegner J."/>
            <person name="Teichmann S.A."/>
            <person name="Ueda H.R."/>
            <person name="van Nimwegen E."/>
            <person name="Verardo R."/>
            <person name="Wei C.L."/>
            <person name="Yagi K."/>
            <person name="Yamanishi H."/>
            <person name="Zabarovsky E."/>
            <person name="Zhu S."/>
            <person name="Zimmer A."/>
            <person name="Hide W."/>
            <person name="Bult C."/>
            <person name="Grimmond S.M."/>
            <person name="Teasdale R.D."/>
            <person name="Liu E.T."/>
            <person name="Brusic V."/>
            <person name="Quackenbush J."/>
            <person name="Wahlestedt C."/>
            <person name="Mattick J.S."/>
            <person name="Hume D.A."/>
            <person name="Kai C."/>
            <person name="Sasaki D."/>
            <person name="Tomaru Y."/>
            <person name="Fukuda S."/>
            <person name="Kanamori-Katayama M."/>
            <person name="Suzuki M."/>
            <person name="Aoki J."/>
            <person name="Arakawa T."/>
            <person name="Iida J."/>
            <person name="Imamura K."/>
            <person name="Itoh M."/>
            <person name="Kato T."/>
            <person name="Kawaji H."/>
            <person name="Kawagashira N."/>
            <person name="Kawashima T."/>
            <person name="Kojima M."/>
            <person name="Kondo S."/>
            <person name="Konno H."/>
            <person name="Nakano K."/>
            <person name="Ninomiya N."/>
            <person name="Nishio T."/>
            <person name="Okada M."/>
            <person name="Plessy C."/>
            <person name="Shibata K."/>
            <person name="Shiraki T."/>
            <person name="Suzuki S."/>
            <person name="Tagami M."/>
            <person name="Waki K."/>
            <person name="Watahiki A."/>
            <person name="Okamura-Oho Y."/>
            <person name="Suzuki H."/>
            <person name="Kawai J."/>
            <person name="Hayashizaki Y."/>
        </authorList>
    </citation>
    <scope>NUCLEOTIDE SEQUENCE [LARGE SCALE MRNA]</scope>
    <source>
        <strain>C57BL/6J</strain>
        <tissue>Kidney</tissue>
    </source>
</reference>
<reference key="3">
    <citation type="journal article" date="2004" name="Genome Res.">
        <title>The status, quality, and expansion of the NIH full-length cDNA project: the Mammalian Gene Collection (MGC).</title>
        <authorList>
            <consortium name="The MGC Project Team"/>
        </authorList>
    </citation>
    <scope>NUCLEOTIDE SEQUENCE [LARGE SCALE MRNA]</scope>
    <source>
        <tissue>Brain</tissue>
    </source>
</reference>
<accession>Q5PT54</accession>
<accession>B9EJ85</accession>